<accession>A4QBJ5</accession>
<sequence>MKVHKGDMVLVISGPDKGAKGQVIAAFPKTEKVLVEGVNRIKKHVANSAPERGAESGGIVTQEAPIHVSNVMVIDSDGNPTRVGYRFDENGKKVRVSRRNGKDI</sequence>
<dbReference type="EMBL" id="AP009044">
    <property type="protein sequence ID" value="BAF53592.1"/>
    <property type="molecule type" value="Genomic_DNA"/>
</dbReference>
<dbReference type="RefSeq" id="WP_003854314.1">
    <property type="nucleotide sequence ID" value="NC_009342.1"/>
</dbReference>
<dbReference type="SMR" id="A4QBJ5"/>
<dbReference type="GeneID" id="1021520"/>
<dbReference type="KEGG" id="cgt:cgR_0621"/>
<dbReference type="HOGENOM" id="CLU_093315_2_2_11"/>
<dbReference type="PhylomeDB" id="A4QBJ5"/>
<dbReference type="Proteomes" id="UP000006698">
    <property type="component" value="Chromosome"/>
</dbReference>
<dbReference type="GO" id="GO:1990904">
    <property type="term" value="C:ribonucleoprotein complex"/>
    <property type="evidence" value="ECO:0007669"/>
    <property type="project" value="UniProtKB-KW"/>
</dbReference>
<dbReference type="GO" id="GO:0005840">
    <property type="term" value="C:ribosome"/>
    <property type="evidence" value="ECO:0007669"/>
    <property type="project" value="UniProtKB-KW"/>
</dbReference>
<dbReference type="GO" id="GO:0019843">
    <property type="term" value="F:rRNA binding"/>
    <property type="evidence" value="ECO:0007669"/>
    <property type="project" value="UniProtKB-UniRule"/>
</dbReference>
<dbReference type="GO" id="GO:0003735">
    <property type="term" value="F:structural constituent of ribosome"/>
    <property type="evidence" value="ECO:0007669"/>
    <property type="project" value="InterPro"/>
</dbReference>
<dbReference type="GO" id="GO:0006412">
    <property type="term" value="P:translation"/>
    <property type="evidence" value="ECO:0007669"/>
    <property type="project" value="UniProtKB-UniRule"/>
</dbReference>
<dbReference type="CDD" id="cd06089">
    <property type="entry name" value="KOW_RPL26"/>
    <property type="match status" value="1"/>
</dbReference>
<dbReference type="FunFam" id="2.30.30.30:FF:000004">
    <property type="entry name" value="50S ribosomal protein L24"/>
    <property type="match status" value="1"/>
</dbReference>
<dbReference type="Gene3D" id="2.30.30.30">
    <property type="match status" value="1"/>
</dbReference>
<dbReference type="HAMAP" id="MF_01326_B">
    <property type="entry name" value="Ribosomal_uL24_B"/>
    <property type="match status" value="1"/>
</dbReference>
<dbReference type="InterPro" id="IPR005824">
    <property type="entry name" value="KOW"/>
</dbReference>
<dbReference type="InterPro" id="IPR014722">
    <property type="entry name" value="Rib_uL2_dom2"/>
</dbReference>
<dbReference type="InterPro" id="IPR003256">
    <property type="entry name" value="Ribosomal_uL24"/>
</dbReference>
<dbReference type="InterPro" id="IPR005825">
    <property type="entry name" value="Ribosomal_uL24_CS"/>
</dbReference>
<dbReference type="InterPro" id="IPR041988">
    <property type="entry name" value="Ribosomal_uL24_KOW"/>
</dbReference>
<dbReference type="InterPro" id="IPR008991">
    <property type="entry name" value="Translation_prot_SH3-like_sf"/>
</dbReference>
<dbReference type="NCBIfam" id="TIGR01079">
    <property type="entry name" value="rplX_bact"/>
    <property type="match status" value="1"/>
</dbReference>
<dbReference type="PANTHER" id="PTHR12903">
    <property type="entry name" value="MITOCHONDRIAL RIBOSOMAL PROTEIN L24"/>
    <property type="match status" value="1"/>
</dbReference>
<dbReference type="Pfam" id="PF00467">
    <property type="entry name" value="KOW"/>
    <property type="match status" value="1"/>
</dbReference>
<dbReference type="Pfam" id="PF17136">
    <property type="entry name" value="ribosomal_L24"/>
    <property type="match status" value="1"/>
</dbReference>
<dbReference type="SMART" id="SM00739">
    <property type="entry name" value="KOW"/>
    <property type="match status" value="1"/>
</dbReference>
<dbReference type="SUPFAM" id="SSF50104">
    <property type="entry name" value="Translation proteins SH3-like domain"/>
    <property type="match status" value="1"/>
</dbReference>
<dbReference type="PROSITE" id="PS01108">
    <property type="entry name" value="RIBOSOMAL_L24"/>
    <property type="match status" value="1"/>
</dbReference>
<comment type="function">
    <text evidence="1">One of two assembly initiator proteins, it binds directly to the 5'-end of the 23S rRNA, where it nucleates assembly of the 50S subunit.</text>
</comment>
<comment type="function">
    <text evidence="1">One of the proteins that surrounds the polypeptide exit tunnel on the outside of the subunit.</text>
</comment>
<comment type="subunit">
    <text evidence="1">Part of the 50S ribosomal subunit.</text>
</comment>
<comment type="similarity">
    <text evidence="1">Belongs to the universal ribosomal protein uL24 family.</text>
</comment>
<organism>
    <name type="scientific">Corynebacterium glutamicum (strain R)</name>
    <dbReference type="NCBI Taxonomy" id="340322"/>
    <lineage>
        <taxon>Bacteria</taxon>
        <taxon>Bacillati</taxon>
        <taxon>Actinomycetota</taxon>
        <taxon>Actinomycetes</taxon>
        <taxon>Mycobacteriales</taxon>
        <taxon>Corynebacteriaceae</taxon>
        <taxon>Corynebacterium</taxon>
    </lineage>
</organism>
<feature type="chain" id="PRO_1000052207" description="Large ribosomal subunit protein uL24">
    <location>
        <begin position="1"/>
        <end position="104"/>
    </location>
</feature>
<feature type="region of interest" description="Disordered" evidence="2">
    <location>
        <begin position="82"/>
        <end position="104"/>
    </location>
</feature>
<feature type="compositionally biased region" description="Basic residues" evidence="2">
    <location>
        <begin position="93"/>
        <end position="104"/>
    </location>
</feature>
<reference key="1">
    <citation type="journal article" date="2007" name="Microbiology">
        <title>Comparative analysis of the Corynebacterium glutamicum group and complete genome sequence of strain R.</title>
        <authorList>
            <person name="Yukawa H."/>
            <person name="Omumasaba C.A."/>
            <person name="Nonaka H."/>
            <person name="Kos P."/>
            <person name="Okai N."/>
            <person name="Suzuki N."/>
            <person name="Suda M."/>
            <person name="Tsuge Y."/>
            <person name="Watanabe J."/>
            <person name="Ikeda Y."/>
            <person name="Vertes A.A."/>
            <person name="Inui M."/>
        </authorList>
    </citation>
    <scope>NUCLEOTIDE SEQUENCE [LARGE SCALE GENOMIC DNA]</scope>
    <source>
        <strain>R</strain>
    </source>
</reference>
<protein>
    <recommendedName>
        <fullName evidence="1">Large ribosomal subunit protein uL24</fullName>
    </recommendedName>
    <alternativeName>
        <fullName evidence="3">50S ribosomal protein L24</fullName>
    </alternativeName>
</protein>
<keyword id="KW-0687">Ribonucleoprotein</keyword>
<keyword id="KW-0689">Ribosomal protein</keyword>
<keyword id="KW-0694">RNA-binding</keyword>
<keyword id="KW-0699">rRNA-binding</keyword>
<evidence type="ECO:0000255" key="1">
    <source>
        <dbReference type="HAMAP-Rule" id="MF_01326"/>
    </source>
</evidence>
<evidence type="ECO:0000256" key="2">
    <source>
        <dbReference type="SAM" id="MobiDB-lite"/>
    </source>
</evidence>
<evidence type="ECO:0000305" key="3"/>
<gene>
    <name evidence="1" type="primary">rplX</name>
    <name type="ordered locus">cgR_0621</name>
</gene>
<name>RL24_CORGB</name>
<proteinExistence type="inferred from homology"/>